<keyword id="KW-0165">Cleavage on pair of basic residues</keyword>
<keyword id="KW-1015">Disulfide bond</keyword>
<keyword id="KW-0272">Extracellular matrix</keyword>
<keyword id="KW-0325">Glycoprotein</keyword>
<keyword id="KW-0339">Growth factor</keyword>
<keyword id="KW-0497">Mitogen</keyword>
<keyword id="KW-1185">Reference proteome</keyword>
<keyword id="KW-0964">Secreted</keyword>
<keyword id="KW-0732">Signal</keyword>
<reference key="1">
    <citation type="submission" date="2005-09" db="EMBL/GenBank/DDBJ databases">
        <title>Transforming growth factor beta 1 cDNA sequence in ferret.</title>
        <authorList>
            <person name="Senchak A.J."/>
            <person name="Sato A."/>
            <person name="Vazquez R."/>
            <person name="Cable B.B."/>
        </authorList>
    </citation>
    <scope>NUCLEOTIDE SEQUENCE [MRNA]</scope>
</reference>
<evidence type="ECO:0000250" key="1">
    <source>
        <dbReference type="UniProtKB" id="P01137"/>
    </source>
</evidence>
<evidence type="ECO:0000250" key="2">
    <source>
        <dbReference type="UniProtKB" id="P04202"/>
    </source>
</evidence>
<evidence type="ECO:0000250" key="3">
    <source>
        <dbReference type="UniProtKB" id="P07200"/>
    </source>
</evidence>
<evidence type="ECO:0000255" key="4"/>
<evidence type="ECO:0000305" key="5"/>
<feature type="signal peptide" evidence="1">
    <location>
        <begin position="1"/>
        <end position="29"/>
    </location>
</feature>
<feature type="chain" id="PRO_0000232452" description="Latency-associated peptide" evidence="1">
    <location>
        <begin position="30"/>
        <end position="278"/>
    </location>
</feature>
<feature type="chain" id="PRO_0000232453" description="Transforming growth factor beta-1" evidence="1">
    <location>
        <begin position="279"/>
        <end position="390"/>
    </location>
</feature>
<feature type="region of interest" description="Straightjacket domain" evidence="3">
    <location>
        <begin position="30"/>
        <end position="74"/>
    </location>
</feature>
<feature type="region of interest" description="Arm domain" evidence="3">
    <location>
        <begin position="75"/>
        <end position="271"/>
    </location>
</feature>
<feature type="region of interest" description="Bowtie tail" evidence="1">
    <location>
        <begin position="226"/>
        <end position="252"/>
    </location>
</feature>
<feature type="short sequence motif" description="Cell attachment site" evidence="4">
    <location>
        <begin position="244"/>
        <end position="246"/>
    </location>
</feature>
<feature type="site" description="Cleavage; by FURIN" evidence="1">
    <location>
        <begin position="278"/>
        <end position="279"/>
    </location>
</feature>
<feature type="glycosylation site" description="N-linked (GlcNAc...) asparagine" evidence="4">
    <location>
        <position position="82"/>
    </location>
</feature>
<feature type="glycosylation site" description="N-linked (GlcNAc...) asparagine" evidence="4">
    <location>
        <position position="136"/>
    </location>
</feature>
<feature type="glycosylation site" description="N-linked (GlcNAc...) asparagine" evidence="4">
    <location>
        <position position="176"/>
    </location>
</feature>
<feature type="disulfide bond" description="Interchain (with C-1359 or C-1384 in LTBP1); in inactive form" evidence="3">
    <location>
        <position position="33"/>
    </location>
</feature>
<feature type="disulfide bond" description="Interchain (with C-225)" evidence="1">
    <location>
        <position position="223"/>
    </location>
</feature>
<feature type="disulfide bond" description="Interchain (with C-223)" evidence="1">
    <location>
        <position position="225"/>
    </location>
</feature>
<feature type="disulfide bond" evidence="1">
    <location>
        <begin position="285"/>
        <end position="294"/>
    </location>
</feature>
<feature type="disulfide bond" evidence="1">
    <location>
        <begin position="293"/>
        <end position="356"/>
    </location>
</feature>
<feature type="disulfide bond" evidence="1">
    <location>
        <begin position="322"/>
        <end position="387"/>
    </location>
</feature>
<feature type="disulfide bond" evidence="1">
    <location>
        <begin position="326"/>
        <end position="389"/>
    </location>
</feature>
<feature type="disulfide bond" description="Interchain" evidence="1">
    <location>
        <position position="355"/>
    </location>
</feature>
<dbReference type="EMBL" id="DQ228357">
    <property type="protein sequence ID" value="ABB16434.1"/>
    <property type="molecule type" value="mRNA"/>
</dbReference>
<dbReference type="RefSeq" id="NP_001297138.1">
    <property type="nucleotide sequence ID" value="NM_001310209.1"/>
</dbReference>
<dbReference type="SMR" id="Q38HS2"/>
<dbReference type="FunCoup" id="Q38HS2">
    <property type="interactions" value="73"/>
</dbReference>
<dbReference type="STRING" id="9669.ENSMPUP00000017540"/>
<dbReference type="GlyCosmos" id="Q38HS2">
    <property type="glycosylation" value="3 sites, No reported glycans"/>
</dbReference>
<dbReference type="GeneID" id="101670127"/>
<dbReference type="CTD" id="7040"/>
<dbReference type="eggNOG" id="KOG3900">
    <property type="taxonomic scope" value="Eukaryota"/>
</dbReference>
<dbReference type="InParanoid" id="Q38HS2"/>
<dbReference type="OrthoDB" id="8863549at2759"/>
<dbReference type="Proteomes" id="UP000000715">
    <property type="component" value="Unplaced"/>
</dbReference>
<dbReference type="GO" id="GO:0072562">
    <property type="term" value="C:blood microparticle"/>
    <property type="evidence" value="ECO:0000250"/>
    <property type="project" value="AgBase"/>
</dbReference>
<dbReference type="GO" id="GO:0009986">
    <property type="term" value="C:cell surface"/>
    <property type="evidence" value="ECO:0000250"/>
    <property type="project" value="AgBase"/>
</dbReference>
<dbReference type="GO" id="GO:0005737">
    <property type="term" value="C:cytoplasm"/>
    <property type="evidence" value="ECO:0000250"/>
    <property type="project" value="AgBase"/>
</dbReference>
<dbReference type="GO" id="GO:0005615">
    <property type="term" value="C:extracellular space"/>
    <property type="evidence" value="ECO:0000250"/>
    <property type="project" value="AgBase"/>
</dbReference>
<dbReference type="GO" id="GO:0005634">
    <property type="term" value="C:nucleus"/>
    <property type="evidence" value="ECO:0000250"/>
    <property type="project" value="AgBase"/>
</dbReference>
<dbReference type="GO" id="GO:0005125">
    <property type="term" value="F:cytokine activity"/>
    <property type="evidence" value="ECO:0007669"/>
    <property type="project" value="TreeGrafter"/>
</dbReference>
<dbReference type="GO" id="GO:0008083">
    <property type="term" value="F:growth factor activity"/>
    <property type="evidence" value="ECO:0007669"/>
    <property type="project" value="UniProtKB-KW"/>
</dbReference>
<dbReference type="GO" id="GO:0034713">
    <property type="term" value="F:type I transforming growth factor beta receptor binding"/>
    <property type="evidence" value="ECO:0000250"/>
    <property type="project" value="AgBase"/>
</dbReference>
<dbReference type="GO" id="GO:0005114">
    <property type="term" value="F:type II transforming growth factor beta receptor binding"/>
    <property type="evidence" value="ECO:0000250"/>
    <property type="project" value="AgBase"/>
</dbReference>
<dbReference type="GO" id="GO:0034714">
    <property type="term" value="F:type III transforming growth factor beta receptor binding"/>
    <property type="evidence" value="ECO:0000250"/>
    <property type="project" value="AgBase"/>
</dbReference>
<dbReference type="GO" id="GO:0006754">
    <property type="term" value="P:ATP biosynthetic process"/>
    <property type="evidence" value="ECO:0000250"/>
    <property type="project" value="AgBase"/>
</dbReference>
<dbReference type="GO" id="GO:0045216">
    <property type="term" value="P:cell-cell junction organization"/>
    <property type="evidence" value="ECO:0000250"/>
    <property type="project" value="AgBase"/>
</dbReference>
<dbReference type="GO" id="GO:0071560">
    <property type="term" value="P:cellular response to transforming growth factor beta stimulus"/>
    <property type="evidence" value="ECO:0000250"/>
    <property type="project" value="AgBase"/>
</dbReference>
<dbReference type="GO" id="GO:0002062">
    <property type="term" value="P:chondrocyte differentiation"/>
    <property type="evidence" value="ECO:0000250"/>
    <property type="project" value="AgBase"/>
</dbReference>
<dbReference type="GO" id="GO:0001837">
    <property type="term" value="P:epithelial to mesenchymal transition"/>
    <property type="evidence" value="ECO:0000250"/>
    <property type="project" value="UniProtKB"/>
</dbReference>
<dbReference type="GO" id="GO:0085029">
    <property type="term" value="P:extracellular matrix assembly"/>
    <property type="evidence" value="ECO:0000250"/>
    <property type="project" value="AgBase"/>
</dbReference>
<dbReference type="GO" id="GO:0097191">
    <property type="term" value="P:extrinsic apoptotic signaling pathway"/>
    <property type="evidence" value="ECO:0000250"/>
    <property type="project" value="AgBase"/>
</dbReference>
<dbReference type="GO" id="GO:0002244">
    <property type="term" value="P:hematopoietic progenitor cell differentiation"/>
    <property type="evidence" value="ECO:0000250"/>
    <property type="project" value="AgBase"/>
</dbReference>
<dbReference type="GO" id="GO:0030214">
    <property type="term" value="P:hyaluronan catabolic process"/>
    <property type="evidence" value="ECO:0000250"/>
    <property type="project" value="AgBase"/>
</dbReference>
<dbReference type="GO" id="GO:0031293">
    <property type="term" value="P:membrane protein intracellular domain proteolysis"/>
    <property type="evidence" value="ECO:0000250"/>
    <property type="project" value="UniProtKB"/>
</dbReference>
<dbReference type="GO" id="GO:0043537">
    <property type="term" value="P:negative regulation of blood vessel endothelial cell migration"/>
    <property type="evidence" value="ECO:0000250"/>
    <property type="project" value="AgBase"/>
</dbReference>
<dbReference type="GO" id="GO:0045786">
    <property type="term" value="P:negative regulation of cell cycle"/>
    <property type="evidence" value="ECO:0000250"/>
    <property type="project" value="AgBase"/>
</dbReference>
<dbReference type="GO" id="GO:0030308">
    <property type="term" value="P:negative regulation of cell growth"/>
    <property type="evidence" value="ECO:0000250"/>
    <property type="project" value="AgBase"/>
</dbReference>
<dbReference type="GO" id="GO:0008285">
    <property type="term" value="P:negative regulation of cell population proliferation"/>
    <property type="evidence" value="ECO:0000250"/>
    <property type="project" value="AgBase"/>
</dbReference>
<dbReference type="GO" id="GO:2000048">
    <property type="term" value="P:negative regulation of cell-cell adhesion mediated by cadherin"/>
    <property type="evidence" value="ECO:0000250"/>
    <property type="project" value="AgBase"/>
</dbReference>
<dbReference type="GO" id="GO:0045892">
    <property type="term" value="P:negative regulation of DNA-templated transcription"/>
    <property type="evidence" value="ECO:0000250"/>
    <property type="project" value="AgBase"/>
</dbReference>
<dbReference type="GO" id="GO:0050680">
    <property type="term" value="P:negative regulation of epithelial cell proliferation"/>
    <property type="evidence" value="ECO:0000250"/>
    <property type="project" value="AgBase"/>
</dbReference>
<dbReference type="GO" id="GO:0045599">
    <property type="term" value="P:negative regulation of fat cell differentiation"/>
    <property type="evidence" value="ECO:0000250"/>
    <property type="project" value="AgBase"/>
</dbReference>
<dbReference type="GO" id="GO:0010629">
    <property type="term" value="P:negative regulation of gene expression"/>
    <property type="evidence" value="ECO:0000250"/>
    <property type="project" value="BHF-UCL"/>
</dbReference>
<dbReference type="GO" id="GO:1900126">
    <property type="term" value="P:negative regulation of hyaluronan biosynthetic process"/>
    <property type="evidence" value="ECO:0000250"/>
    <property type="project" value="AgBase"/>
</dbReference>
<dbReference type="GO" id="GO:0010936">
    <property type="term" value="P:negative regulation of macrophage cytokine production"/>
    <property type="evidence" value="ECO:0000250"/>
    <property type="project" value="AgBase"/>
</dbReference>
<dbReference type="GO" id="GO:0045662">
    <property type="term" value="P:negative regulation of myoblast differentiation"/>
    <property type="evidence" value="ECO:0000250"/>
    <property type="project" value="AgBase"/>
</dbReference>
<dbReference type="GO" id="GO:0048642">
    <property type="term" value="P:negative regulation of skeletal muscle tissue development"/>
    <property type="evidence" value="ECO:0000250"/>
    <property type="project" value="AgBase"/>
</dbReference>
<dbReference type="GO" id="GO:0071895">
    <property type="term" value="P:odontoblast differentiation"/>
    <property type="evidence" value="ECO:0000250"/>
    <property type="project" value="UniProtKB"/>
</dbReference>
<dbReference type="GO" id="GO:0006796">
    <property type="term" value="P:phosphate-containing compound metabolic process"/>
    <property type="evidence" value="ECO:0000250"/>
    <property type="project" value="AgBase"/>
</dbReference>
<dbReference type="GO" id="GO:0043536">
    <property type="term" value="P:positive regulation of blood vessel endothelial cell migration"/>
    <property type="evidence" value="ECO:0000250"/>
    <property type="project" value="AgBase"/>
</dbReference>
<dbReference type="GO" id="GO:0051781">
    <property type="term" value="P:positive regulation of cell division"/>
    <property type="evidence" value="ECO:0007669"/>
    <property type="project" value="UniProtKB-KW"/>
</dbReference>
<dbReference type="GO" id="GO:0030335">
    <property type="term" value="P:positive regulation of cell migration"/>
    <property type="evidence" value="ECO:0000250"/>
    <property type="project" value="BHF-UCL"/>
</dbReference>
<dbReference type="GO" id="GO:0008284">
    <property type="term" value="P:positive regulation of cell population proliferation"/>
    <property type="evidence" value="ECO:0000250"/>
    <property type="project" value="AgBase"/>
</dbReference>
<dbReference type="GO" id="GO:0050921">
    <property type="term" value="P:positive regulation of chemotaxis"/>
    <property type="evidence" value="ECO:0000250"/>
    <property type="project" value="AgBase"/>
</dbReference>
<dbReference type="GO" id="GO:0032967">
    <property type="term" value="P:positive regulation of collagen biosynthetic process"/>
    <property type="evidence" value="ECO:0000250"/>
    <property type="project" value="AgBase"/>
</dbReference>
<dbReference type="GO" id="GO:0045742">
    <property type="term" value="P:positive regulation of epidermal growth factor receptor signaling pathway"/>
    <property type="evidence" value="ECO:0000250"/>
    <property type="project" value="AgBase"/>
</dbReference>
<dbReference type="GO" id="GO:0010718">
    <property type="term" value="P:positive regulation of epithelial to mesenchymal transition"/>
    <property type="evidence" value="ECO:0000250"/>
    <property type="project" value="AgBase"/>
</dbReference>
<dbReference type="GO" id="GO:0070374">
    <property type="term" value="P:positive regulation of ERK1 and ERK2 cascade"/>
    <property type="evidence" value="ECO:0000250"/>
    <property type="project" value="UniProtKB"/>
</dbReference>
<dbReference type="GO" id="GO:0010763">
    <property type="term" value="P:positive regulation of fibroblast migration"/>
    <property type="evidence" value="ECO:0000250"/>
    <property type="project" value="AgBase"/>
</dbReference>
<dbReference type="GO" id="GO:0032740">
    <property type="term" value="P:positive regulation of interleukin-17 production"/>
    <property type="evidence" value="ECO:0000250"/>
    <property type="project" value="AgBase"/>
</dbReference>
<dbReference type="GO" id="GO:0048298">
    <property type="term" value="P:positive regulation of isotype switching to IgA isotypes"/>
    <property type="evidence" value="ECO:0000250"/>
    <property type="project" value="AgBase"/>
</dbReference>
<dbReference type="GO" id="GO:0014008">
    <property type="term" value="P:positive regulation of microglia differentiation"/>
    <property type="evidence" value="ECO:0000250"/>
    <property type="project" value="UniProtKB"/>
</dbReference>
<dbReference type="GO" id="GO:0042307">
    <property type="term" value="P:positive regulation of protein import into nucleus"/>
    <property type="evidence" value="ECO:0000250"/>
    <property type="project" value="AgBase"/>
</dbReference>
<dbReference type="GO" id="GO:0051247">
    <property type="term" value="P:positive regulation of protein metabolic process"/>
    <property type="evidence" value="ECO:0000250"/>
    <property type="project" value="AgBase"/>
</dbReference>
<dbReference type="GO" id="GO:0031334">
    <property type="term" value="P:positive regulation of protein-containing complex assembly"/>
    <property type="evidence" value="ECO:0000250"/>
    <property type="project" value="AgBase"/>
</dbReference>
<dbReference type="GO" id="GO:0060391">
    <property type="term" value="P:positive regulation of SMAD protein signal transduction"/>
    <property type="evidence" value="ECO:0000250"/>
    <property type="project" value="UniProtKB"/>
</dbReference>
<dbReference type="GO" id="GO:0032930">
    <property type="term" value="P:positive regulation of superoxide anion generation"/>
    <property type="evidence" value="ECO:0000250"/>
    <property type="project" value="AgBase"/>
</dbReference>
<dbReference type="GO" id="GO:0045944">
    <property type="term" value="P:positive regulation of transcription by RNA polymerase II"/>
    <property type="evidence" value="ECO:0000250"/>
    <property type="project" value="AgBase"/>
</dbReference>
<dbReference type="GO" id="GO:0032801">
    <property type="term" value="P:receptor catabolic process"/>
    <property type="evidence" value="ECO:0000250"/>
    <property type="project" value="AgBase"/>
</dbReference>
<dbReference type="GO" id="GO:0070723">
    <property type="term" value="P:response to cholesterol"/>
    <property type="evidence" value="ECO:0000250"/>
    <property type="project" value="AgBase"/>
</dbReference>
<dbReference type="GO" id="GO:0032355">
    <property type="term" value="P:response to estradiol"/>
    <property type="evidence" value="ECO:0000250"/>
    <property type="project" value="AgBase"/>
</dbReference>
<dbReference type="GO" id="GO:0032570">
    <property type="term" value="P:response to progesterone"/>
    <property type="evidence" value="ECO:0000250"/>
    <property type="project" value="AgBase"/>
</dbReference>
<dbReference type="GO" id="GO:0009611">
    <property type="term" value="P:response to wounding"/>
    <property type="evidence" value="ECO:0000250"/>
    <property type="project" value="AgBase"/>
</dbReference>
<dbReference type="GO" id="GO:0007435">
    <property type="term" value="P:salivary gland morphogenesis"/>
    <property type="evidence" value="ECO:0000250"/>
    <property type="project" value="AgBase"/>
</dbReference>
<dbReference type="GO" id="GO:0007179">
    <property type="term" value="P:transforming growth factor beta receptor signaling pathway"/>
    <property type="evidence" value="ECO:0000250"/>
    <property type="project" value="AgBase"/>
</dbReference>
<dbReference type="CDD" id="cd19384">
    <property type="entry name" value="TGF_beta_TGFB1"/>
    <property type="match status" value="1"/>
</dbReference>
<dbReference type="FunFam" id="2.10.90.10:FF:000004">
    <property type="entry name" value="Transforming growth factor beta"/>
    <property type="match status" value="1"/>
</dbReference>
<dbReference type="FunFam" id="2.60.120.970:FF:000010">
    <property type="entry name" value="Transforming growth factor beta"/>
    <property type="match status" value="1"/>
</dbReference>
<dbReference type="Gene3D" id="2.60.120.970">
    <property type="match status" value="1"/>
</dbReference>
<dbReference type="Gene3D" id="2.10.90.10">
    <property type="entry name" value="Cystine-knot cytokines"/>
    <property type="match status" value="1"/>
</dbReference>
<dbReference type="InterPro" id="IPR029034">
    <property type="entry name" value="Cystine-knot_cytokine"/>
</dbReference>
<dbReference type="InterPro" id="IPR001839">
    <property type="entry name" value="TGF-b_C"/>
</dbReference>
<dbReference type="InterPro" id="IPR001111">
    <property type="entry name" value="TGF-b_propeptide"/>
</dbReference>
<dbReference type="InterPro" id="IPR016319">
    <property type="entry name" value="TGF-beta"/>
</dbReference>
<dbReference type="InterPro" id="IPR015615">
    <property type="entry name" value="TGF-beta-rel"/>
</dbReference>
<dbReference type="InterPro" id="IPR003939">
    <property type="entry name" value="TGFb1"/>
</dbReference>
<dbReference type="InterPro" id="IPR017948">
    <property type="entry name" value="TGFb_CS"/>
</dbReference>
<dbReference type="PANTHER" id="PTHR11848">
    <property type="entry name" value="TGF-BETA FAMILY"/>
    <property type="match status" value="1"/>
</dbReference>
<dbReference type="PANTHER" id="PTHR11848:SF125">
    <property type="entry name" value="TRANSFORMING GROWTH FACTOR BETA-1 PROPROTEIN"/>
    <property type="match status" value="1"/>
</dbReference>
<dbReference type="Pfam" id="PF00019">
    <property type="entry name" value="TGF_beta"/>
    <property type="match status" value="1"/>
</dbReference>
<dbReference type="Pfam" id="PF00688">
    <property type="entry name" value="TGFb_propeptide"/>
    <property type="match status" value="1"/>
</dbReference>
<dbReference type="PIRSF" id="PIRSF001787">
    <property type="entry name" value="TGF-beta"/>
    <property type="match status" value="1"/>
</dbReference>
<dbReference type="PRINTS" id="PR01423">
    <property type="entry name" value="TGFBETA"/>
</dbReference>
<dbReference type="PRINTS" id="PR01424">
    <property type="entry name" value="TGFBETA1"/>
</dbReference>
<dbReference type="SMART" id="SM00204">
    <property type="entry name" value="TGFB"/>
    <property type="match status" value="1"/>
</dbReference>
<dbReference type="SUPFAM" id="SSF57501">
    <property type="entry name" value="Cystine-knot cytokines"/>
    <property type="match status" value="1"/>
</dbReference>
<dbReference type="PROSITE" id="PS00250">
    <property type="entry name" value="TGF_BETA_1"/>
    <property type="match status" value="1"/>
</dbReference>
<dbReference type="PROSITE" id="PS51362">
    <property type="entry name" value="TGF_BETA_2"/>
    <property type="match status" value="1"/>
</dbReference>
<sequence length="390" mass="44235">MPPSGLRLLPLLLPLLWLLVLTPGRPAAGLSTCKTIDMELVKRKRIEAIRGQILSKLRLASPPSQGEVPPGPLPEAVLALYNSTRDRVAGESAEPEPEPEADYYAKEVTRVLMVETTNRIYDKIKKSPHSIYMLFNTSELREAVPEPVLLSRAELRLLRLKLKVEQHVELYQKYSNNSWRYLSNRLLAPSDSPEWLSFDVTGVVRQWLSRGGEIEGFRLSAHCSCDSRDNTLQVDINGLSSSRRGDLATIHGMNRPFLLLMATPLERAQHLHTSRHRRALDTNYCFSSTEKNCCVRQLYIDFRKDLGWKWIHEPKGYHANFCLGPCPYIWSLDTQYSKVLALYNQHNPGASAAPCCVPQALEPLPIVYYVGRKPKVEQLSNMIVRSCKCS</sequence>
<protein>
    <recommendedName>
        <fullName>Transforming growth factor beta-1 proprotein</fullName>
    </recommendedName>
    <component>
        <recommendedName>
            <fullName>Latency-associated peptide</fullName>
            <shortName>LAP</shortName>
        </recommendedName>
    </component>
    <component>
        <recommendedName>
            <fullName>Transforming growth factor beta-1</fullName>
            <shortName>TGF-beta-1</shortName>
        </recommendedName>
    </component>
</protein>
<comment type="function">
    <text evidence="1">Transforming growth factor beta-1 proprotein: Precursor of the Latency-associated peptide (LAP) and Transforming growth factor beta-1 (TGF-beta-1) chains, which constitute the regulatory and active subunit of TGF-beta-1, respectively.</text>
</comment>
<comment type="function">
    <molecule>Latency-associated peptide</molecule>
    <text evidence="1">Required to maintain the Transforming growth factor beta-1 (TGF-beta-1) chain in a latent state during storage in extracellular matrix. Associates non-covalently with TGF-beta-1 and regulates its activation via interaction with 'milieu molecules', such as LTBP1, LRRC32/GARP and LRRC33/NRROS, that control activation of TGF-beta-1. Interaction with LRRC33/NRROS regulates activation of TGF-beta-1 in macrophages and microglia. Interaction with LRRC32/GARP controls activation of TGF-beta-1 on the surface of activated regulatory T-cells (Tregs). Interaction with integrins (ITGAV:ITGB6 or ITGAV:ITGB8) results in distortion of the Latency-associated peptide chain and subsequent release of the active TGF-beta-1.</text>
</comment>
<comment type="function">
    <molecule>Transforming growth factor beta-1</molecule>
    <text evidence="1 2">Multifunctional protein that regulates the growth and differentiation of various cell types and is involved in various processes, such as normal development, immune function, microglia function and responses to neurodegeneration (By similarity). Activation into mature form follows different steps: following cleavage of the proprotein in the Golgi apparatus, Latency-associated peptide (LAP) and Transforming growth factor beta-1 (TGF-beta-1) chains remain non-covalently linked rendering TGF-beta-1 inactive during storage in extracellular matrix. At the same time, LAP chain interacts with 'milieu molecules', such as LTBP1, LRRC32/GARP and LRRC33/NRROS that control activation of TGF-beta-1 and maintain it in a latent state during storage in extracellular milieus. TGF-beta-1 is released from LAP by integrins (ITGAV:ITGB6 or ITGAV:ITGB8): integrin-binding to LAP stabilizes an alternative conformation of the LAP bowtie tail and results in distortion of the LAP chain and subsequent release of the active TGF-beta-1. Once activated following release of LAP, TGF-beta-1 acts by binding to TGF-beta receptors (TGFBR1 and TGFBR2), which transduce signal (By similarity). While expressed by many cells types, TGF-beta-1 only has a very localized range of action within cell environment thanks to fine regulation of its activation by Latency-associated peptide chain (LAP) and 'milieu molecules'. Plays an important role in bone remodeling: acts as a potent stimulator of osteoblastic bone formation, causing chemotaxis, proliferation and differentiation in committed osteoblasts. Can promote either T-helper 17 cells (Th17) or regulatory T-cells (Treg) lineage differentiation in a concentration-dependent manner. At high concentrations, leads to FOXP3-mediated suppression of RORC and down-regulation of IL-17 expression, favoring Treg cell development. At low concentrations in concert with IL-6 and IL-21, leads to expression of the IL-17 and IL-23 receptors, favoring differentiation to Th17 cells (By similarity). Stimulates sustained production of collagen through the activation of CREB3L1 by regulated intramembrane proteolysis (RIP). Mediates SMAD2/3 activation by inducing its phosphorylation and subsequent translocation to the nucleus. Positively regulates odontoblastic differentiation in dental papilla cells, via promotion of IPO7-mediated translocation of phosphorylated SMAD2 to the nucleus and subsequent transcription of target genes (By similarity). Can induce epithelial-to-mesenchymal transition (EMT) and cell migration in various cell types (By similarity).</text>
</comment>
<comment type="subunit">
    <text evidence="1 2">Homodimer; disulfide-linked. Interacts with the serine proteases, HTRA1 and HTRA3: the interaction with either inhibits TGFB1-mediated signaling and the HTRA protease activity is required for this inhibition. May interact with THSD4; this interaction may lead to sequestration by FBN1 microfibril assembly and attenuation of TGFB signaling. Interacts with CD109, DPT and ASPN. Interacts with EFEMP2. Interacts with TSKU; the interaction contributes to regulation of the hair cycle. Interacts with TGFBR3 (By similarity).</text>
</comment>
<comment type="subunit">
    <molecule>Latency-associated peptide</molecule>
    <text evidence="1 2">Homodimer; disulfide-linked. Interacts with transforming growth factor beta-1 (TGF-beta-1) chain; interaction is non-covalent and maintains TGF-beta-1 in a latent state; each latency-associated peptide (LAP) monomer interacts with TGF-beta-1 in the other monomer. Interacts with LTBP1; leading to regulation of TGF-beta-1 activation. Interacts with LRRC32/GARP; leading to regulation of TGF-beta-1 activation on the surface of activated regulatory T-cells (Tregs). Interacts with LRRC33/NRROS; leading to regulation of TGF-beta-1 activation in macrophages and microglia. Interacts (via cell attachment site) with integrins ITGAV and ITGB6 (ITGAV:ITGB6), leading to release of the active TGF-beta-1. Interacts with NREP; the interaction results in a decrease in TGFB1 autoinduction. Interacts with HSP90AB1; inhibits latent TGFB1 activation.</text>
</comment>
<comment type="subunit">
    <molecule>Transforming growth factor beta-1</molecule>
    <text evidence="1">Homodimer; disulfide-linked. Interacts with TGF-beta receptors (TGFBR1 and TGFBR2), leading to signal transduction.</text>
</comment>
<comment type="subcellular location">
    <molecule>Latency-associated peptide</molecule>
    <subcellularLocation>
        <location evidence="1">Secreted</location>
        <location evidence="1">Extracellular space</location>
        <location evidence="1">Extracellular matrix</location>
    </subcellularLocation>
</comment>
<comment type="subcellular location">
    <molecule>Transforming growth factor beta-1</molecule>
    <subcellularLocation>
        <location evidence="1">Secreted</location>
    </subcellularLocation>
</comment>
<comment type="domain">
    <molecule>Latency-associated peptide</molecule>
    <text evidence="3">The 'straitjacket' and 'arm' domains encircle the Transforming growth factor beta-1 (TGF-beta-1) monomers and are fastened together by strong bonding between Lys-56 and Tyr-103/Tyr-104.</text>
</comment>
<comment type="domain">
    <molecule>Latency-associated peptide</molecule>
    <text evidence="1">The cell attachment site motif mediates binding to integrins (ITGAV:ITGB6 or ITGAV:ITGB8). The motif locates to a long loop in the arm domain called the bowtie tail. Integrin-binding stabilizes an alternative conformation of the bowtie tail. Activation by integrin requires force application by the actin cytoskeleton, which is resisted by the 'milieu molecules' (such as LTBP1, LRRC32/GARP and/or LRRC33/NRROS), resulting in distortion of the prodomain and release of the active TGF-beta-1.</text>
</comment>
<comment type="PTM">
    <text evidence="1">Transforming growth factor beta-1 proprotein: The precursor proprotein is cleaved in the Golgi apparatus by FURIN to form Transforming growth factor beta-1 (TGF-beta-1) and Latency-associated peptide (LAP) chains, which remain non-covalently linked, rendering TGF-beta-1 inactive.</text>
</comment>
<comment type="PTM">
    <molecule>Latency-associated peptide</molecule>
    <text evidence="1">N-glycosylated. Deglycosylation leads to activation of Transforming growth factor beta-1 (TGF-beta-1); mechanisms triggering deglycosylation-driven activation of TGF-beta-1 are however unclear.</text>
</comment>
<comment type="similarity">
    <text evidence="5">Belongs to the TGF-beta family.</text>
</comment>
<gene>
    <name type="primary">TGFB1</name>
</gene>
<name>TGFB1_MUSPF</name>
<accession>Q38HS2</accession>
<organism>
    <name type="scientific">Mustela putorius furo</name>
    <name type="common">European domestic ferret</name>
    <name type="synonym">Mustela furo</name>
    <dbReference type="NCBI Taxonomy" id="9669"/>
    <lineage>
        <taxon>Eukaryota</taxon>
        <taxon>Metazoa</taxon>
        <taxon>Chordata</taxon>
        <taxon>Craniata</taxon>
        <taxon>Vertebrata</taxon>
        <taxon>Euteleostomi</taxon>
        <taxon>Mammalia</taxon>
        <taxon>Eutheria</taxon>
        <taxon>Laurasiatheria</taxon>
        <taxon>Carnivora</taxon>
        <taxon>Caniformia</taxon>
        <taxon>Musteloidea</taxon>
        <taxon>Mustelidae</taxon>
        <taxon>Mustelinae</taxon>
        <taxon>Mustela</taxon>
    </lineage>
</organism>
<proteinExistence type="evidence at transcript level"/>